<protein>
    <recommendedName>
        <fullName>ATP-dependent RNA helicase DBP4</fullName>
        <ecNumber>3.6.4.13</ecNumber>
    </recommendedName>
</protein>
<gene>
    <name type="primary">DBP4</name>
    <name type="ordered locus">CNBA7250</name>
</gene>
<evidence type="ECO:0000250" key="1"/>
<evidence type="ECO:0000255" key="2">
    <source>
        <dbReference type="PROSITE-ProRule" id="PRU00541"/>
    </source>
</evidence>
<evidence type="ECO:0000255" key="3">
    <source>
        <dbReference type="PROSITE-ProRule" id="PRU00542"/>
    </source>
</evidence>
<evidence type="ECO:0000256" key="4">
    <source>
        <dbReference type="SAM" id="MobiDB-lite"/>
    </source>
</evidence>
<evidence type="ECO:0000305" key="5"/>
<accession>P0CQ83</accession>
<accession>Q55YW1</accession>
<accession>Q5KN79</accession>
<sequence>MALGDKNQGSSKSQAKQKGTKGKNAQPRLKSNQLKRLKINEELKELQSRVDNFVPPSEITLFSELPMSSKTQKGLKSSHFLNPTPIQSLAIPPALQARDILGSAKTGSGKTLAFLIPLLERLYLEKWGPMDGLGAVVISPTRELAVQTFMQLRDIGKYHNFSAGLVIGGKPLKEEQERLGRMNILIATPGRLLQHLDSTVGFDSSAVKVLVLDEADRLLDLGFLPALKAIVSHFSPVQTAPGSRPSRQTLLFSATQSKDLAALAKLSLYEPLYISCNKPGEEGVMPANLEQYYAVVPLERKLDALWGFVKSHLKMKGIVFVTSGKQARRVRFIFETFRRLHPGLPLMHLHGKQKQPTRLDIFQRFSSSKSALLICTDVAARGLDFPAVDWVIQLDCPDDVDTYIHRVGRTARYQSAGTALTILCPSEEEGMKTRWGEKAIEVKRIKIKEGKMGNLKQSMQNFAFKEPEIKYLGQRAFISYMKSVHIQKDKSIFKIDALPAEAFAESMGLPGAPQIKLGNQKAAKVRGPSKEELARKAEKEEEEEEERAVVGSDEESEEDESEGLGSEDEEEEIDDEAEEIDDEEESGEESGSDEETEEEKDASKPKAPAVRTKYDRMFERKNQSILTPHYTALIAHDADNAAGAGEADDDDDVFTLARRDHNLSDDEEADTDAILGAEALAAELKKPLITSEDLSKRKLKAAASKKGLLKSRPGPEKVLFDEETGEAREFYKSGVDVEKEMSAADKRREYLEKEREIMKIQDKIDKEVAREKKKELKRKRKERERELRQMEMGDEPVAYLGGDDDYASADEGRSLSPSPAPSLEPERHAKKQRRGGVQESGAGDLEDEEALALRLLQGS</sequence>
<proteinExistence type="inferred from homology"/>
<dbReference type="EC" id="3.6.4.13"/>
<dbReference type="EMBL" id="AAEY01000005">
    <property type="protein sequence ID" value="EAL22957.1"/>
    <property type="molecule type" value="Genomic_DNA"/>
</dbReference>
<dbReference type="RefSeq" id="XP_777604.1">
    <property type="nucleotide sequence ID" value="XM_772511.1"/>
</dbReference>
<dbReference type="SMR" id="P0CQ83"/>
<dbReference type="GeneID" id="4933991"/>
<dbReference type="KEGG" id="cnb:CNBA7250"/>
<dbReference type="VEuPathDB" id="FungiDB:CNBA7250"/>
<dbReference type="HOGENOM" id="CLU_003041_26_1_1"/>
<dbReference type="OrthoDB" id="8280at5206"/>
<dbReference type="GO" id="GO:0005730">
    <property type="term" value="C:nucleolus"/>
    <property type="evidence" value="ECO:0007669"/>
    <property type="project" value="UniProtKB-SubCell"/>
</dbReference>
<dbReference type="GO" id="GO:0032040">
    <property type="term" value="C:small-subunit processome"/>
    <property type="evidence" value="ECO:0007669"/>
    <property type="project" value="EnsemblFungi"/>
</dbReference>
<dbReference type="GO" id="GO:0005524">
    <property type="term" value="F:ATP binding"/>
    <property type="evidence" value="ECO:0007669"/>
    <property type="project" value="UniProtKB-KW"/>
</dbReference>
<dbReference type="GO" id="GO:0016887">
    <property type="term" value="F:ATP hydrolysis activity"/>
    <property type="evidence" value="ECO:0007669"/>
    <property type="project" value="RHEA"/>
</dbReference>
<dbReference type="GO" id="GO:0042802">
    <property type="term" value="F:identical protein binding"/>
    <property type="evidence" value="ECO:0007669"/>
    <property type="project" value="EnsemblFungi"/>
</dbReference>
<dbReference type="GO" id="GO:0003723">
    <property type="term" value="F:RNA binding"/>
    <property type="evidence" value="ECO:0007669"/>
    <property type="project" value="UniProtKB-KW"/>
</dbReference>
<dbReference type="GO" id="GO:0003724">
    <property type="term" value="F:RNA helicase activity"/>
    <property type="evidence" value="ECO:0007669"/>
    <property type="project" value="UniProtKB-EC"/>
</dbReference>
<dbReference type="GO" id="GO:0006364">
    <property type="term" value="P:rRNA processing"/>
    <property type="evidence" value="ECO:0007669"/>
    <property type="project" value="UniProtKB-KW"/>
</dbReference>
<dbReference type="CDD" id="cd17941">
    <property type="entry name" value="DEADc_DDX10"/>
    <property type="match status" value="1"/>
</dbReference>
<dbReference type="CDD" id="cd18787">
    <property type="entry name" value="SF2_C_DEAD"/>
    <property type="match status" value="1"/>
</dbReference>
<dbReference type="Gene3D" id="3.40.50.300">
    <property type="entry name" value="P-loop containing nucleotide triphosphate hydrolases"/>
    <property type="match status" value="2"/>
</dbReference>
<dbReference type="InterPro" id="IPR011545">
    <property type="entry name" value="DEAD/DEAH_box_helicase_dom"/>
</dbReference>
<dbReference type="InterPro" id="IPR014001">
    <property type="entry name" value="Helicase_ATP-bd"/>
</dbReference>
<dbReference type="InterPro" id="IPR001650">
    <property type="entry name" value="Helicase_C-like"/>
</dbReference>
<dbReference type="InterPro" id="IPR027417">
    <property type="entry name" value="P-loop_NTPase"/>
</dbReference>
<dbReference type="InterPro" id="IPR000629">
    <property type="entry name" value="RNA-helicase_DEAD-box_CS"/>
</dbReference>
<dbReference type="InterPro" id="IPR014014">
    <property type="entry name" value="RNA_helicase_DEAD_Q_motif"/>
</dbReference>
<dbReference type="InterPro" id="IPR025313">
    <property type="entry name" value="SPB4-like_CTE"/>
</dbReference>
<dbReference type="PANTHER" id="PTHR24031">
    <property type="entry name" value="RNA HELICASE"/>
    <property type="match status" value="1"/>
</dbReference>
<dbReference type="Pfam" id="PF13959">
    <property type="entry name" value="CTE_SPB4"/>
    <property type="match status" value="1"/>
</dbReference>
<dbReference type="Pfam" id="PF00270">
    <property type="entry name" value="DEAD"/>
    <property type="match status" value="1"/>
</dbReference>
<dbReference type="Pfam" id="PF00271">
    <property type="entry name" value="Helicase_C"/>
    <property type="match status" value="1"/>
</dbReference>
<dbReference type="SMART" id="SM00487">
    <property type="entry name" value="DEXDc"/>
    <property type="match status" value="1"/>
</dbReference>
<dbReference type="SMART" id="SM01178">
    <property type="entry name" value="DUF4217"/>
    <property type="match status" value="1"/>
</dbReference>
<dbReference type="SMART" id="SM00490">
    <property type="entry name" value="HELICc"/>
    <property type="match status" value="1"/>
</dbReference>
<dbReference type="SUPFAM" id="SSF52540">
    <property type="entry name" value="P-loop containing nucleoside triphosphate hydrolases"/>
    <property type="match status" value="1"/>
</dbReference>
<dbReference type="PROSITE" id="PS00039">
    <property type="entry name" value="DEAD_ATP_HELICASE"/>
    <property type="match status" value="1"/>
</dbReference>
<dbReference type="PROSITE" id="PS51192">
    <property type="entry name" value="HELICASE_ATP_BIND_1"/>
    <property type="match status" value="1"/>
</dbReference>
<dbReference type="PROSITE" id="PS51194">
    <property type="entry name" value="HELICASE_CTER"/>
    <property type="match status" value="1"/>
</dbReference>
<dbReference type="PROSITE" id="PS51195">
    <property type="entry name" value="Q_MOTIF"/>
    <property type="match status" value="1"/>
</dbReference>
<comment type="function">
    <text evidence="1">ATP-dependent RNA helicase required for ribosome biogenesis. Involved in the release of U14 snoRNA in pre-ribosomal complexes. Required for pre-rRNA cleavage at site A2 (By similarity).</text>
</comment>
<comment type="catalytic activity">
    <reaction>
        <text>ATP + H2O = ADP + phosphate + H(+)</text>
        <dbReference type="Rhea" id="RHEA:13065"/>
        <dbReference type="ChEBI" id="CHEBI:15377"/>
        <dbReference type="ChEBI" id="CHEBI:15378"/>
        <dbReference type="ChEBI" id="CHEBI:30616"/>
        <dbReference type="ChEBI" id="CHEBI:43474"/>
        <dbReference type="ChEBI" id="CHEBI:456216"/>
        <dbReference type="EC" id="3.6.4.13"/>
    </reaction>
</comment>
<comment type="subunit">
    <text evidence="1">Interacts with the U3 and U14 snoRNAs. Associates with pre-ribosomal complexes (By similarity).</text>
</comment>
<comment type="subcellular location">
    <subcellularLocation>
        <location evidence="1">Nucleus</location>
        <location evidence="1">Nucleolus</location>
    </subcellularLocation>
</comment>
<comment type="domain">
    <text>The Q motif is unique to and characteristic of the DEAD box family of RNA helicases and controls ATP binding and hydrolysis.</text>
</comment>
<comment type="similarity">
    <text evidence="5">Belongs to the DEAD box helicase family. DDX10/DBP4 subfamily.</text>
</comment>
<organism>
    <name type="scientific">Cryptococcus neoformans var. neoformans serotype D (strain B-3501A)</name>
    <name type="common">Filobasidiella neoformans</name>
    <dbReference type="NCBI Taxonomy" id="283643"/>
    <lineage>
        <taxon>Eukaryota</taxon>
        <taxon>Fungi</taxon>
        <taxon>Dikarya</taxon>
        <taxon>Basidiomycota</taxon>
        <taxon>Agaricomycotina</taxon>
        <taxon>Tremellomycetes</taxon>
        <taxon>Tremellales</taxon>
        <taxon>Cryptococcaceae</taxon>
        <taxon>Cryptococcus</taxon>
        <taxon>Cryptococcus neoformans species complex</taxon>
    </lineage>
</organism>
<keyword id="KW-0067">ATP-binding</keyword>
<keyword id="KW-0347">Helicase</keyword>
<keyword id="KW-0378">Hydrolase</keyword>
<keyword id="KW-0547">Nucleotide-binding</keyword>
<keyword id="KW-0539">Nucleus</keyword>
<keyword id="KW-0690">Ribosome biogenesis</keyword>
<keyword id="KW-0694">RNA-binding</keyword>
<keyword id="KW-0698">rRNA processing</keyword>
<name>DBP4_CRYNB</name>
<feature type="chain" id="PRO_0000410252" description="ATP-dependent RNA helicase DBP4">
    <location>
        <begin position="1"/>
        <end position="859"/>
    </location>
</feature>
<feature type="domain" description="Helicase ATP-binding" evidence="2">
    <location>
        <begin position="91"/>
        <end position="274"/>
    </location>
</feature>
<feature type="domain" description="Helicase C-terminal" evidence="3">
    <location>
        <begin position="288"/>
        <end position="463"/>
    </location>
</feature>
<feature type="region of interest" description="Disordered" evidence="4">
    <location>
        <begin position="1"/>
        <end position="34"/>
    </location>
</feature>
<feature type="region of interest" description="Disordered" evidence="4">
    <location>
        <begin position="512"/>
        <end position="615"/>
    </location>
</feature>
<feature type="region of interest" description="Disordered" evidence="4">
    <location>
        <begin position="771"/>
        <end position="859"/>
    </location>
</feature>
<feature type="short sequence motif" description="Q motif">
    <location>
        <begin position="60"/>
        <end position="88"/>
    </location>
</feature>
<feature type="short sequence motif" description="DEAD box">
    <location>
        <begin position="213"/>
        <end position="216"/>
    </location>
</feature>
<feature type="compositionally biased region" description="Polar residues" evidence="4">
    <location>
        <begin position="7"/>
        <end position="17"/>
    </location>
</feature>
<feature type="compositionally biased region" description="Basic and acidic residues" evidence="4">
    <location>
        <begin position="528"/>
        <end position="539"/>
    </location>
</feature>
<feature type="compositionally biased region" description="Acidic residues" evidence="4">
    <location>
        <begin position="540"/>
        <end position="600"/>
    </location>
</feature>
<feature type="compositionally biased region" description="Low complexity" evidence="4">
    <location>
        <begin position="814"/>
        <end position="823"/>
    </location>
</feature>
<feature type="binding site" evidence="2">
    <location>
        <begin position="104"/>
        <end position="111"/>
    </location>
    <ligand>
        <name>ATP</name>
        <dbReference type="ChEBI" id="CHEBI:30616"/>
    </ligand>
</feature>
<reference key="1">
    <citation type="journal article" date="2005" name="Science">
        <title>The genome of the basidiomycetous yeast and human pathogen Cryptococcus neoformans.</title>
        <authorList>
            <person name="Loftus B.J."/>
            <person name="Fung E."/>
            <person name="Roncaglia P."/>
            <person name="Rowley D."/>
            <person name="Amedeo P."/>
            <person name="Bruno D."/>
            <person name="Vamathevan J."/>
            <person name="Miranda M."/>
            <person name="Anderson I.J."/>
            <person name="Fraser J.A."/>
            <person name="Allen J.E."/>
            <person name="Bosdet I.E."/>
            <person name="Brent M.R."/>
            <person name="Chiu R."/>
            <person name="Doering T.L."/>
            <person name="Donlin M.J."/>
            <person name="D'Souza C.A."/>
            <person name="Fox D.S."/>
            <person name="Grinberg V."/>
            <person name="Fu J."/>
            <person name="Fukushima M."/>
            <person name="Haas B.J."/>
            <person name="Huang J.C."/>
            <person name="Janbon G."/>
            <person name="Jones S.J.M."/>
            <person name="Koo H.L."/>
            <person name="Krzywinski M.I."/>
            <person name="Kwon-Chung K.J."/>
            <person name="Lengeler K.B."/>
            <person name="Maiti R."/>
            <person name="Marra M.A."/>
            <person name="Marra R.E."/>
            <person name="Mathewson C.A."/>
            <person name="Mitchell T.G."/>
            <person name="Pertea M."/>
            <person name="Riggs F.R."/>
            <person name="Salzberg S.L."/>
            <person name="Schein J.E."/>
            <person name="Shvartsbeyn A."/>
            <person name="Shin H."/>
            <person name="Shumway M."/>
            <person name="Specht C.A."/>
            <person name="Suh B.B."/>
            <person name="Tenney A."/>
            <person name="Utterback T.R."/>
            <person name="Wickes B.L."/>
            <person name="Wortman J.R."/>
            <person name="Wye N.H."/>
            <person name="Kronstad J.W."/>
            <person name="Lodge J.K."/>
            <person name="Heitman J."/>
            <person name="Davis R.W."/>
            <person name="Fraser C.M."/>
            <person name="Hyman R.W."/>
        </authorList>
    </citation>
    <scope>NUCLEOTIDE SEQUENCE [LARGE SCALE GENOMIC DNA]</scope>
    <source>
        <strain>B-3501A</strain>
    </source>
</reference>